<feature type="chain" id="PRO_0000172044" description="Putative pre-16S rRNA nuclease">
    <location>
        <begin position="1"/>
        <end position="148"/>
    </location>
</feature>
<sequence>MNSMKQKEAFLGVDYGKKRIGLAFASAPLLITLPIGSINTCSSLALTAQALITIIKERAVTTVVFGNPLPMQKSYASSVQSEIQELAALVRDMTSLEVILWDERLSSAQAERMLKNDCGLSRKQRKNSSDSLAATLILSSFLDSRKLY</sequence>
<dbReference type="EC" id="3.1.-.-" evidence="1"/>
<dbReference type="EMBL" id="AE002160">
    <property type="protein sequence ID" value="AAF39309.1"/>
    <property type="molecule type" value="Genomic_DNA"/>
</dbReference>
<dbReference type="PIR" id="E81700">
    <property type="entry name" value="E81700"/>
</dbReference>
<dbReference type="SMR" id="Q9PKK9"/>
<dbReference type="KEGG" id="cmu:TC_0456"/>
<dbReference type="eggNOG" id="COG0816">
    <property type="taxonomic scope" value="Bacteria"/>
</dbReference>
<dbReference type="HOGENOM" id="CLU_098240_2_0_0"/>
<dbReference type="OrthoDB" id="9796140at2"/>
<dbReference type="Proteomes" id="UP000000800">
    <property type="component" value="Chromosome"/>
</dbReference>
<dbReference type="GO" id="GO:0005829">
    <property type="term" value="C:cytosol"/>
    <property type="evidence" value="ECO:0007669"/>
    <property type="project" value="TreeGrafter"/>
</dbReference>
<dbReference type="GO" id="GO:0004518">
    <property type="term" value="F:nuclease activity"/>
    <property type="evidence" value="ECO:0007669"/>
    <property type="project" value="UniProtKB-KW"/>
</dbReference>
<dbReference type="GO" id="GO:0000967">
    <property type="term" value="P:rRNA 5'-end processing"/>
    <property type="evidence" value="ECO:0007669"/>
    <property type="project" value="UniProtKB-UniRule"/>
</dbReference>
<dbReference type="CDD" id="cd16964">
    <property type="entry name" value="YqgF"/>
    <property type="match status" value="1"/>
</dbReference>
<dbReference type="Gene3D" id="3.30.420.140">
    <property type="entry name" value="YqgF/RNase H-like domain"/>
    <property type="match status" value="1"/>
</dbReference>
<dbReference type="HAMAP" id="MF_00651">
    <property type="entry name" value="Nuclease_YqgF"/>
    <property type="match status" value="1"/>
</dbReference>
<dbReference type="InterPro" id="IPR012337">
    <property type="entry name" value="RNaseH-like_sf"/>
</dbReference>
<dbReference type="InterPro" id="IPR005227">
    <property type="entry name" value="YqgF"/>
</dbReference>
<dbReference type="InterPro" id="IPR006641">
    <property type="entry name" value="YqgF/RNaseH-like_dom"/>
</dbReference>
<dbReference type="InterPro" id="IPR037027">
    <property type="entry name" value="YqgF/RNaseH-like_dom_sf"/>
</dbReference>
<dbReference type="NCBIfam" id="TIGR00250">
    <property type="entry name" value="RNAse_H_YqgF"/>
    <property type="match status" value="1"/>
</dbReference>
<dbReference type="PANTHER" id="PTHR33317">
    <property type="entry name" value="POLYNUCLEOTIDYL TRANSFERASE, RIBONUCLEASE H-LIKE SUPERFAMILY PROTEIN"/>
    <property type="match status" value="1"/>
</dbReference>
<dbReference type="PANTHER" id="PTHR33317:SF4">
    <property type="entry name" value="POLYNUCLEOTIDYL TRANSFERASE, RIBONUCLEASE H-LIKE SUPERFAMILY PROTEIN"/>
    <property type="match status" value="1"/>
</dbReference>
<dbReference type="Pfam" id="PF03652">
    <property type="entry name" value="RuvX"/>
    <property type="match status" value="1"/>
</dbReference>
<dbReference type="SMART" id="SM00732">
    <property type="entry name" value="YqgFc"/>
    <property type="match status" value="1"/>
</dbReference>
<dbReference type="SUPFAM" id="SSF53098">
    <property type="entry name" value="Ribonuclease H-like"/>
    <property type="match status" value="1"/>
</dbReference>
<organism>
    <name type="scientific">Chlamydia muridarum (strain MoPn / Nigg)</name>
    <dbReference type="NCBI Taxonomy" id="243161"/>
    <lineage>
        <taxon>Bacteria</taxon>
        <taxon>Pseudomonadati</taxon>
        <taxon>Chlamydiota</taxon>
        <taxon>Chlamydiia</taxon>
        <taxon>Chlamydiales</taxon>
        <taxon>Chlamydiaceae</taxon>
        <taxon>Chlamydia/Chlamydophila group</taxon>
        <taxon>Chlamydia</taxon>
    </lineage>
</organism>
<gene>
    <name type="ordered locus">TC_0456</name>
</gene>
<keyword id="KW-0963">Cytoplasm</keyword>
<keyword id="KW-0378">Hydrolase</keyword>
<keyword id="KW-0540">Nuclease</keyword>
<keyword id="KW-0690">Ribosome biogenesis</keyword>
<proteinExistence type="inferred from homology"/>
<evidence type="ECO:0000255" key="1">
    <source>
        <dbReference type="HAMAP-Rule" id="MF_00651"/>
    </source>
</evidence>
<comment type="function">
    <text evidence="1">Could be a nuclease involved in processing of the 5'-end of pre-16S rRNA.</text>
</comment>
<comment type="subcellular location">
    <subcellularLocation>
        <location evidence="1">Cytoplasm</location>
    </subcellularLocation>
</comment>
<comment type="similarity">
    <text evidence="1">Belongs to the YqgF nuclease family.</text>
</comment>
<reference key="1">
    <citation type="journal article" date="2000" name="Nucleic Acids Res.">
        <title>Genome sequences of Chlamydia trachomatis MoPn and Chlamydia pneumoniae AR39.</title>
        <authorList>
            <person name="Read T.D."/>
            <person name="Brunham R.C."/>
            <person name="Shen C."/>
            <person name="Gill S.R."/>
            <person name="Heidelberg J.F."/>
            <person name="White O."/>
            <person name="Hickey E.K."/>
            <person name="Peterson J.D."/>
            <person name="Utterback T.R."/>
            <person name="Berry K.J."/>
            <person name="Bass S."/>
            <person name="Linher K.D."/>
            <person name="Weidman J.F."/>
            <person name="Khouri H.M."/>
            <person name="Craven B."/>
            <person name="Bowman C."/>
            <person name="Dodson R.J."/>
            <person name="Gwinn M.L."/>
            <person name="Nelson W.C."/>
            <person name="DeBoy R.T."/>
            <person name="Kolonay J.F."/>
            <person name="McClarty G."/>
            <person name="Salzberg S.L."/>
            <person name="Eisen J.A."/>
            <person name="Fraser C.M."/>
        </authorList>
    </citation>
    <scope>NUCLEOTIDE SEQUENCE [LARGE SCALE GENOMIC DNA]</scope>
    <source>
        <strain>MoPn / Nigg</strain>
    </source>
</reference>
<protein>
    <recommendedName>
        <fullName evidence="1">Putative pre-16S rRNA nuclease</fullName>
        <ecNumber evidence="1">3.1.-.-</ecNumber>
    </recommendedName>
</protein>
<accession>Q9PKK9</accession>
<name>YQGF_CHLMU</name>